<organism>
    <name type="scientific">Lacticaseibacillus casei (strain BL23)</name>
    <name type="common">Lactobacillus casei</name>
    <dbReference type="NCBI Taxonomy" id="543734"/>
    <lineage>
        <taxon>Bacteria</taxon>
        <taxon>Bacillati</taxon>
        <taxon>Bacillota</taxon>
        <taxon>Bacilli</taxon>
        <taxon>Lactobacillales</taxon>
        <taxon>Lactobacillaceae</taxon>
        <taxon>Lacticaseibacillus</taxon>
    </lineage>
</organism>
<reference key="1">
    <citation type="submission" date="2008-06" db="EMBL/GenBank/DDBJ databases">
        <title>Lactobacillus casei BL23 complete genome sequence.</title>
        <authorList>
            <person name="Maze A."/>
            <person name="Boel G."/>
            <person name="Bourand A."/>
            <person name="Loux V."/>
            <person name="Gibrat J.F."/>
            <person name="Zuniga M."/>
            <person name="Hartke A."/>
            <person name="Deutscher J."/>
        </authorList>
    </citation>
    <scope>NUCLEOTIDE SEQUENCE [LARGE SCALE GENOMIC DNA]</scope>
    <source>
        <strain>BL23</strain>
    </source>
</reference>
<proteinExistence type="inferred from homology"/>
<protein>
    <recommendedName>
        <fullName evidence="1">ATP-dependent protease subunit HslV</fullName>
        <ecNumber evidence="1">3.4.25.2</ecNumber>
    </recommendedName>
</protein>
<keyword id="KW-0021">Allosteric enzyme</keyword>
<keyword id="KW-0963">Cytoplasm</keyword>
<keyword id="KW-0378">Hydrolase</keyword>
<keyword id="KW-0479">Metal-binding</keyword>
<keyword id="KW-0645">Protease</keyword>
<keyword id="KW-0915">Sodium</keyword>
<keyword id="KW-0888">Threonine protease</keyword>
<evidence type="ECO:0000255" key="1">
    <source>
        <dbReference type="HAMAP-Rule" id="MF_00248"/>
    </source>
</evidence>
<gene>
    <name evidence="1" type="primary">hslV</name>
    <name type="ordered locus">LCABL_16280</name>
</gene>
<feature type="chain" id="PRO_1000100898" description="ATP-dependent protease subunit HslV">
    <location>
        <begin position="1"/>
        <end position="174"/>
    </location>
</feature>
<feature type="active site" evidence="1">
    <location>
        <position position="2"/>
    </location>
</feature>
<feature type="binding site" evidence="1">
    <location>
        <position position="159"/>
    </location>
    <ligand>
        <name>Na(+)</name>
        <dbReference type="ChEBI" id="CHEBI:29101"/>
    </ligand>
</feature>
<feature type="binding site" evidence="1">
    <location>
        <position position="162"/>
    </location>
    <ligand>
        <name>Na(+)</name>
        <dbReference type="ChEBI" id="CHEBI:29101"/>
    </ligand>
</feature>
<feature type="binding site" evidence="1">
    <location>
        <position position="165"/>
    </location>
    <ligand>
        <name>Na(+)</name>
        <dbReference type="ChEBI" id="CHEBI:29101"/>
    </ligand>
</feature>
<sequence length="174" mass="18743">MTTIAAVRKDGVTALAGDGQVTLGEKVIMKGNAQKVRRIYHDQVVIGFAGGVADAFTLQDWFEKKLEHYAGNLRRSAVALAQDWRKDPTLQKLEAMMIVMDEHDLLLVSGSGEVIDPDEDVVAIGSGGNFAQAAAIAMLRHAPDMTPADIAKEAVNIAGNIDIFTNHNVIVESF</sequence>
<comment type="function">
    <text evidence="1">Protease subunit of a proteasome-like degradation complex believed to be a general protein degrading machinery.</text>
</comment>
<comment type="catalytic activity">
    <reaction evidence="1">
        <text>ATP-dependent cleavage of peptide bonds with broad specificity.</text>
        <dbReference type="EC" id="3.4.25.2"/>
    </reaction>
</comment>
<comment type="activity regulation">
    <text evidence="1">Allosterically activated by HslU binding.</text>
</comment>
<comment type="subunit">
    <text evidence="1">A double ring-shaped homohexamer of HslV is capped on each side by a ring-shaped HslU homohexamer. The assembly of the HslU/HslV complex is dependent on binding of ATP.</text>
</comment>
<comment type="subcellular location">
    <subcellularLocation>
        <location evidence="1">Cytoplasm</location>
    </subcellularLocation>
</comment>
<comment type="similarity">
    <text evidence="1">Belongs to the peptidase T1B family. HslV subfamily.</text>
</comment>
<name>HSLV_LACCB</name>
<dbReference type="EC" id="3.4.25.2" evidence="1"/>
<dbReference type="EMBL" id="FM177140">
    <property type="protein sequence ID" value="CAQ66709.1"/>
    <property type="molecule type" value="Genomic_DNA"/>
</dbReference>
<dbReference type="SMR" id="B3WEA8"/>
<dbReference type="KEGG" id="lcb:LCABL_16280"/>
<dbReference type="HOGENOM" id="CLU_093872_1_1_9"/>
<dbReference type="GO" id="GO:0009376">
    <property type="term" value="C:HslUV protease complex"/>
    <property type="evidence" value="ECO:0007669"/>
    <property type="project" value="UniProtKB-UniRule"/>
</dbReference>
<dbReference type="GO" id="GO:0005839">
    <property type="term" value="C:proteasome core complex"/>
    <property type="evidence" value="ECO:0007669"/>
    <property type="project" value="InterPro"/>
</dbReference>
<dbReference type="GO" id="GO:0046872">
    <property type="term" value="F:metal ion binding"/>
    <property type="evidence" value="ECO:0007669"/>
    <property type="project" value="UniProtKB-KW"/>
</dbReference>
<dbReference type="GO" id="GO:0004298">
    <property type="term" value="F:threonine-type endopeptidase activity"/>
    <property type="evidence" value="ECO:0007669"/>
    <property type="project" value="UniProtKB-KW"/>
</dbReference>
<dbReference type="GO" id="GO:0051603">
    <property type="term" value="P:proteolysis involved in protein catabolic process"/>
    <property type="evidence" value="ECO:0007669"/>
    <property type="project" value="InterPro"/>
</dbReference>
<dbReference type="CDD" id="cd01913">
    <property type="entry name" value="protease_HslV"/>
    <property type="match status" value="1"/>
</dbReference>
<dbReference type="Gene3D" id="3.60.20.10">
    <property type="entry name" value="Glutamine Phosphoribosylpyrophosphate, subunit 1, domain 1"/>
    <property type="match status" value="1"/>
</dbReference>
<dbReference type="HAMAP" id="MF_00248">
    <property type="entry name" value="HslV"/>
    <property type="match status" value="1"/>
</dbReference>
<dbReference type="InterPro" id="IPR022281">
    <property type="entry name" value="ATP-dep_Prtase_HsIV_su"/>
</dbReference>
<dbReference type="InterPro" id="IPR029055">
    <property type="entry name" value="Ntn_hydrolases_N"/>
</dbReference>
<dbReference type="InterPro" id="IPR001353">
    <property type="entry name" value="Proteasome_sua/b"/>
</dbReference>
<dbReference type="InterPro" id="IPR023333">
    <property type="entry name" value="Proteasome_suB-type"/>
</dbReference>
<dbReference type="NCBIfam" id="TIGR03692">
    <property type="entry name" value="ATP_dep_HslV"/>
    <property type="match status" value="1"/>
</dbReference>
<dbReference type="NCBIfam" id="NF003964">
    <property type="entry name" value="PRK05456.1"/>
    <property type="match status" value="1"/>
</dbReference>
<dbReference type="PANTHER" id="PTHR32194:SF0">
    <property type="entry name" value="ATP-DEPENDENT PROTEASE SUBUNIT HSLV"/>
    <property type="match status" value="1"/>
</dbReference>
<dbReference type="PANTHER" id="PTHR32194">
    <property type="entry name" value="METALLOPROTEASE TLDD"/>
    <property type="match status" value="1"/>
</dbReference>
<dbReference type="Pfam" id="PF00227">
    <property type="entry name" value="Proteasome"/>
    <property type="match status" value="1"/>
</dbReference>
<dbReference type="SUPFAM" id="SSF56235">
    <property type="entry name" value="N-terminal nucleophile aminohydrolases (Ntn hydrolases)"/>
    <property type="match status" value="1"/>
</dbReference>
<dbReference type="PROSITE" id="PS51476">
    <property type="entry name" value="PROTEASOME_BETA_2"/>
    <property type="match status" value="1"/>
</dbReference>
<accession>B3WEA8</accession>